<dbReference type="EC" id="4.1.1.98" evidence="1"/>
<dbReference type="EMBL" id="CP000934">
    <property type="protein sequence ID" value="ACE83936.1"/>
    <property type="molecule type" value="Genomic_DNA"/>
</dbReference>
<dbReference type="RefSeq" id="WP_012486044.1">
    <property type="nucleotide sequence ID" value="NC_010995.1"/>
</dbReference>
<dbReference type="SMR" id="B3PI23"/>
<dbReference type="STRING" id="498211.CJA_0362"/>
<dbReference type="KEGG" id="cja:CJA_0362"/>
<dbReference type="eggNOG" id="COG0043">
    <property type="taxonomic scope" value="Bacteria"/>
</dbReference>
<dbReference type="HOGENOM" id="CLU_023348_4_1_6"/>
<dbReference type="OrthoDB" id="9809841at2"/>
<dbReference type="UniPathway" id="UPA00232"/>
<dbReference type="Proteomes" id="UP000001036">
    <property type="component" value="Chromosome"/>
</dbReference>
<dbReference type="GO" id="GO:0005829">
    <property type="term" value="C:cytosol"/>
    <property type="evidence" value="ECO:0007669"/>
    <property type="project" value="TreeGrafter"/>
</dbReference>
<dbReference type="GO" id="GO:0005886">
    <property type="term" value="C:plasma membrane"/>
    <property type="evidence" value="ECO:0007669"/>
    <property type="project" value="UniProtKB-SubCell"/>
</dbReference>
<dbReference type="GO" id="GO:0008694">
    <property type="term" value="F:3-octaprenyl-4-hydroxybenzoate carboxy-lyase activity"/>
    <property type="evidence" value="ECO:0007669"/>
    <property type="project" value="UniProtKB-UniRule"/>
</dbReference>
<dbReference type="GO" id="GO:0046872">
    <property type="term" value="F:metal ion binding"/>
    <property type="evidence" value="ECO:0007669"/>
    <property type="project" value="UniProtKB-KW"/>
</dbReference>
<dbReference type="GO" id="GO:0006744">
    <property type="term" value="P:ubiquinone biosynthetic process"/>
    <property type="evidence" value="ECO:0007669"/>
    <property type="project" value="UniProtKB-UniRule"/>
</dbReference>
<dbReference type="FunFam" id="1.20.5.570:FF:000001">
    <property type="entry name" value="3-octaprenyl-4-hydroxybenzoate carboxy-lyase"/>
    <property type="match status" value="1"/>
</dbReference>
<dbReference type="FunFam" id="3.40.1670.10:FF:000001">
    <property type="entry name" value="3-octaprenyl-4-hydroxybenzoate carboxy-lyase"/>
    <property type="match status" value="1"/>
</dbReference>
<dbReference type="Gene3D" id="1.20.5.570">
    <property type="entry name" value="Single helix bin"/>
    <property type="match status" value="1"/>
</dbReference>
<dbReference type="Gene3D" id="3.40.1670.10">
    <property type="entry name" value="UbiD C-terminal domain-like"/>
    <property type="match status" value="1"/>
</dbReference>
<dbReference type="HAMAP" id="MF_01636">
    <property type="entry name" value="UbiD"/>
    <property type="match status" value="1"/>
</dbReference>
<dbReference type="InterPro" id="IPR002830">
    <property type="entry name" value="UbiD"/>
</dbReference>
<dbReference type="InterPro" id="IPR049381">
    <property type="entry name" value="UbiD-like_C"/>
</dbReference>
<dbReference type="InterPro" id="IPR049383">
    <property type="entry name" value="UbiD-like_N"/>
</dbReference>
<dbReference type="InterPro" id="IPR023677">
    <property type="entry name" value="UbiD_bacteria"/>
</dbReference>
<dbReference type="InterPro" id="IPR048304">
    <property type="entry name" value="UbiD_Rift_dom"/>
</dbReference>
<dbReference type="NCBIfam" id="NF008175">
    <property type="entry name" value="PRK10922.1"/>
    <property type="match status" value="1"/>
</dbReference>
<dbReference type="NCBIfam" id="TIGR00148">
    <property type="entry name" value="UbiD family decarboxylase"/>
    <property type="match status" value="1"/>
</dbReference>
<dbReference type="PANTHER" id="PTHR30108">
    <property type="entry name" value="3-OCTAPRENYL-4-HYDROXYBENZOATE CARBOXY-LYASE-RELATED"/>
    <property type="match status" value="1"/>
</dbReference>
<dbReference type="PANTHER" id="PTHR30108:SF17">
    <property type="entry name" value="FERULIC ACID DECARBOXYLASE 1"/>
    <property type="match status" value="1"/>
</dbReference>
<dbReference type="Pfam" id="PF01977">
    <property type="entry name" value="UbiD"/>
    <property type="match status" value="1"/>
</dbReference>
<dbReference type="Pfam" id="PF20696">
    <property type="entry name" value="UbiD_C"/>
    <property type="match status" value="1"/>
</dbReference>
<dbReference type="Pfam" id="PF20695">
    <property type="entry name" value="UbiD_N"/>
    <property type="match status" value="1"/>
</dbReference>
<dbReference type="SUPFAM" id="SSF50475">
    <property type="entry name" value="FMN-binding split barrel"/>
    <property type="match status" value="1"/>
</dbReference>
<dbReference type="SUPFAM" id="SSF143968">
    <property type="entry name" value="UbiD C-terminal domain-like"/>
    <property type="match status" value="1"/>
</dbReference>
<sequence>MKYNDLRDFIALLEARGLLKRIKQEIDPHLEMTEICDRTLRAGGPALLFENPRGYTIPVLGNLFGTPERVALGMGQESVSALRDVGKLLAFLKEPEPPKGFKDAWEKLPIFKQVLNMAPKVVGKAPSQEVVLEGDAVNLDQLPIQTCWPGDAGPLVTWPLVVTRGPHKERQNLGIYRMQKIGKNRLIMRWLSHRGGALDFREFQLQHPGKPFPVAVALGADPATILGAVTPVPDTLSEYAFAGLLRGDKTEVVQCIGNDLQVPASAEFILEGFIAPGDMAPEGPFGDHTGYYNEVDKFPVFTVERITHRRDPIYHSTYTGRPPDEPAILGVALNEVFVPILQKQFPEIVDFYLPPEGCSYRMAVVTMKKQYPGHAKRVMMGVWSFLRQFMYTKFVIVTDDDVNARDWKDVIWAMTTRMDPARDTVMVDNTPIDYLDFASPVSGLGSKIGFDATNKWPGETQREWGTPIAMEQAVKDRVDAIWESLGIDLPTAY</sequence>
<proteinExistence type="inferred from homology"/>
<keyword id="KW-1003">Cell membrane</keyword>
<keyword id="KW-0210">Decarboxylase</keyword>
<keyword id="KW-0285">Flavoprotein</keyword>
<keyword id="KW-0288">FMN</keyword>
<keyword id="KW-0456">Lyase</keyword>
<keyword id="KW-0464">Manganese</keyword>
<keyword id="KW-0472">Membrane</keyword>
<keyword id="KW-0479">Metal-binding</keyword>
<keyword id="KW-1185">Reference proteome</keyword>
<keyword id="KW-0831">Ubiquinone biosynthesis</keyword>
<gene>
    <name evidence="1" type="primary">ubiD</name>
    <name type="ordered locus">CJA_0362</name>
</gene>
<comment type="function">
    <text evidence="1">Catalyzes the decarboxylation of 3-octaprenyl-4-hydroxy benzoate to 2-octaprenylphenol, an intermediate step in ubiquinone biosynthesis.</text>
</comment>
<comment type="catalytic activity">
    <reaction evidence="1">
        <text>a 4-hydroxy-3-(all-trans-polyprenyl)benzoate + H(+) = a 2-(all-trans-polyprenyl)phenol + CO2</text>
        <dbReference type="Rhea" id="RHEA:41680"/>
        <dbReference type="Rhea" id="RHEA-COMP:9514"/>
        <dbReference type="Rhea" id="RHEA-COMP:9516"/>
        <dbReference type="ChEBI" id="CHEBI:1269"/>
        <dbReference type="ChEBI" id="CHEBI:15378"/>
        <dbReference type="ChEBI" id="CHEBI:16526"/>
        <dbReference type="ChEBI" id="CHEBI:78396"/>
        <dbReference type="EC" id="4.1.1.98"/>
    </reaction>
</comment>
<comment type="cofactor">
    <cofactor evidence="1">
        <name>prenylated FMN</name>
        <dbReference type="ChEBI" id="CHEBI:87746"/>
    </cofactor>
    <text evidence="1">Binds 1 prenylated FMN per subunit.</text>
</comment>
<comment type="cofactor">
    <cofactor evidence="1">
        <name>Mn(2+)</name>
        <dbReference type="ChEBI" id="CHEBI:29035"/>
    </cofactor>
</comment>
<comment type="pathway">
    <text evidence="1">Cofactor biosynthesis; ubiquinone biosynthesis.</text>
</comment>
<comment type="subunit">
    <text evidence="1">Homohexamer.</text>
</comment>
<comment type="subcellular location">
    <subcellularLocation>
        <location evidence="1">Cell membrane</location>
        <topology evidence="1">Peripheral membrane protein</topology>
    </subcellularLocation>
</comment>
<comment type="similarity">
    <text evidence="1">Belongs to the UbiD family.</text>
</comment>
<accession>B3PI23</accession>
<evidence type="ECO:0000255" key="1">
    <source>
        <dbReference type="HAMAP-Rule" id="MF_01636"/>
    </source>
</evidence>
<organism>
    <name type="scientific">Cellvibrio japonicus (strain Ueda107)</name>
    <name type="common">Pseudomonas fluorescens subsp. cellulosa</name>
    <dbReference type="NCBI Taxonomy" id="498211"/>
    <lineage>
        <taxon>Bacteria</taxon>
        <taxon>Pseudomonadati</taxon>
        <taxon>Pseudomonadota</taxon>
        <taxon>Gammaproteobacteria</taxon>
        <taxon>Cellvibrionales</taxon>
        <taxon>Cellvibrionaceae</taxon>
        <taxon>Cellvibrio</taxon>
    </lineage>
</organism>
<name>UBID_CELJU</name>
<reference key="1">
    <citation type="journal article" date="2008" name="J. Bacteriol.">
        <title>Insights into plant cell wall degradation from the genome sequence of the soil bacterium Cellvibrio japonicus.</title>
        <authorList>
            <person name="DeBoy R.T."/>
            <person name="Mongodin E.F."/>
            <person name="Fouts D.E."/>
            <person name="Tailford L.E."/>
            <person name="Khouri H."/>
            <person name="Emerson J.B."/>
            <person name="Mohamoud Y."/>
            <person name="Watkins K."/>
            <person name="Henrissat B."/>
            <person name="Gilbert H.J."/>
            <person name="Nelson K.E."/>
        </authorList>
    </citation>
    <scope>NUCLEOTIDE SEQUENCE [LARGE SCALE GENOMIC DNA]</scope>
    <source>
        <strain>Ueda107</strain>
    </source>
</reference>
<feature type="chain" id="PRO_1000186710" description="3-octaprenyl-4-hydroxybenzoate carboxy-lyase">
    <location>
        <begin position="1"/>
        <end position="493"/>
    </location>
</feature>
<feature type="active site" description="Proton donor" evidence="1">
    <location>
        <position position="287"/>
    </location>
</feature>
<feature type="binding site" evidence="1">
    <location>
        <position position="172"/>
    </location>
    <ligand>
        <name>Mn(2+)</name>
        <dbReference type="ChEBI" id="CHEBI:29035"/>
    </ligand>
</feature>
<feature type="binding site" evidence="1">
    <location>
        <begin position="175"/>
        <end position="177"/>
    </location>
    <ligand>
        <name>prenylated FMN</name>
        <dbReference type="ChEBI" id="CHEBI:87746"/>
    </ligand>
</feature>
<feature type="binding site" evidence="1">
    <location>
        <begin position="189"/>
        <end position="191"/>
    </location>
    <ligand>
        <name>prenylated FMN</name>
        <dbReference type="ChEBI" id="CHEBI:87746"/>
    </ligand>
</feature>
<feature type="binding site" evidence="1">
    <location>
        <begin position="194"/>
        <end position="195"/>
    </location>
    <ligand>
        <name>prenylated FMN</name>
        <dbReference type="ChEBI" id="CHEBI:87746"/>
    </ligand>
</feature>
<feature type="binding site" evidence="1">
    <location>
        <position position="238"/>
    </location>
    <ligand>
        <name>Mn(2+)</name>
        <dbReference type="ChEBI" id="CHEBI:29035"/>
    </ligand>
</feature>
<protein>
    <recommendedName>
        <fullName evidence="1">3-octaprenyl-4-hydroxybenzoate carboxy-lyase</fullName>
        <ecNumber evidence="1">4.1.1.98</ecNumber>
    </recommendedName>
    <alternativeName>
        <fullName evidence="1">Polyprenyl p-hydroxybenzoate decarboxylase</fullName>
    </alternativeName>
</protein>